<name>ENO_STRS7</name>
<dbReference type="EC" id="4.2.1.11" evidence="1"/>
<dbReference type="EMBL" id="FM204884">
    <property type="protein sequence ID" value="CAW99637.1"/>
    <property type="molecule type" value="Genomic_DNA"/>
</dbReference>
<dbReference type="SMR" id="C0MH89"/>
<dbReference type="KEGG" id="seq:SZO_11840"/>
<dbReference type="eggNOG" id="COG0148">
    <property type="taxonomic scope" value="Bacteria"/>
</dbReference>
<dbReference type="HOGENOM" id="CLU_031223_2_1_9"/>
<dbReference type="UniPathway" id="UPA00109">
    <property type="reaction ID" value="UER00187"/>
</dbReference>
<dbReference type="Proteomes" id="UP000001368">
    <property type="component" value="Chromosome"/>
</dbReference>
<dbReference type="GO" id="GO:0009986">
    <property type="term" value="C:cell surface"/>
    <property type="evidence" value="ECO:0007669"/>
    <property type="project" value="UniProtKB-SubCell"/>
</dbReference>
<dbReference type="GO" id="GO:0005576">
    <property type="term" value="C:extracellular region"/>
    <property type="evidence" value="ECO:0007669"/>
    <property type="project" value="UniProtKB-SubCell"/>
</dbReference>
<dbReference type="GO" id="GO:0009274">
    <property type="term" value="C:peptidoglycan-based cell wall"/>
    <property type="evidence" value="ECO:0007669"/>
    <property type="project" value="UniProtKB-ARBA"/>
</dbReference>
<dbReference type="GO" id="GO:0000015">
    <property type="term" value="C:phosphopyruvate hydratase complex"/>
    <property type="evidence" value="ECO:0007669"/>
    <property type="project" value="InterPro"/>
</dbReference>
<dbReference type="GO" id="GO:0000287">
    <property type="term" value="F:magnesium ion binding"/>
    <property type="evidence" value="ECO:0007669"/>
    <property type="project" value="UniProtKB-UniRule"/>
</dbReference>
<dbReference type="GO" id="GO:0004634">
    <property type="term" value="F:phosphopyruvate hydratase activity"/>
    <property type="evidence" value="ECO:0007669"/>
    <property type="project" value="UniProtKB-UniRule"/>
</dbReference>
<dbReference type="GO" id="GO:0006096">
    <property type="term" value="P:glycolytic process"/>
    <property type="evidence" value="ECO:0007669"/>
    <property type="project" value="UniProtKB-UniRule"/>
</dbReference>
<dbReference type="CDD" id="cd03313">
    <property type="entry name" value="enolase"/>
    <property type="match status" value="1"/>
</dbReference>
<dbReference type="FunFam" id="3.20.20.120:FF:000001">
    <property type="entry name" value="Enolase"/>
    <property type="match status" value="1"/>
</dbReference>
<dbReference type="FunFam" id="3.30.390.10:FF:000001">
    <property type="entry name" value="Enolase"/>
    <property type="match status" value="1"/>
</dbReference>
<dbReference type="Gene3D" id="3.20.20.120">
    <property type="entry name" value="Enolase-like C-terminal domain"/>
    <property type="match status" value="1"/>
</dbReference>
<dbReference type="Gene3D" id="3.30.390.10">
    <property type="entry name" value="Enolase-like, N-terminal domain"/>
    <property type="match status" value="1"/>
</dbReference>
<dbReference type="HAMAP" id="MF_00318">
    <property type="entry name" value="Enolase"/>
    <property type="match status" value="1"/>
</dbReference>
<dbReference type="InterPro" id="IPR000941">
    <property type="entry name" value="Enolase"/>
</dbReference>
<dbReference type="InterPro" id="IPR036849">
    <property type="entry name" value="Enolase-like_C_sf"/>
</dbReference>
<dbReference type="InterPro" id="IPR029017">
    <property type="entry name" value="Enolase-like_N"/>
</dbReference>
<dbReference type="InterPro" id="IPR020810">
    <property type="entry name" value="Enolase_C"/>
</dbReference>
<dbReference type="InterPro" id="IPR020809">
    <property type="entry name" value="Enolase_CS"/>
</dbReference>
<dbReference type="InterPro" id="IPR020811">
    <property type="entry name" value="Enolase_N"/>
</dbReference>
<dbReference type="NCBIfam" id="TIGR01060">
    <property type="entry name" value="eno"/>
    <property type="match status" value="1"/>
</dbReference>
<dbReference type="PANTHER" id="PTHR11902">
    <property type="entry name" value="ENOLASE"/>
    <property type="match status" value="1"/>
</dbReference>
<dbReference type="PANTHER" id="PTHR11902:SF1">
    <property type="entry name" value="ENOLASE"/>
    <property type="match status" value="1"/>
</dbReference>
<dbReference type="Pfam" id="PF00113">
    <property type="entry name" value="Enolase_C"/>
    <property type="match status" value="1"/>
</dbReference>
<dbReference type="Pfam" id="PF03952">
    <property type="entry name" value="Enolase_N"/>
    <property type="match status" value="1"/>
</dbReference>
<dbReference type="PIRSF" id="PIRSF001400">
    <property type="entry name" value="Enolase"/>
    <property type="match status" value="1"/>
</dbReference>
<dbReference type="PRINTS" id="PR00148">
    <property type="entry name" value="ENOLASE"/>
</dbReference>
<dbReference type="SFLD" id="SFLDS00001">
    <property type="entry name" value="Enolase"/>
    <property type="match status" value="1"/>
</dbReference>
<dbReference type="SFLD" id="SFLDF00002">
    <property type="entry name" value="enolase"/>
    <property type="match status" value="1"/>
</dbReference>
<dbReference type="SMART" id="SM01192">
    <property type="entry name" value="Enolase_C"/>
    <property type="match status" value="1"/>
</dbReference>
<dbReference type="SMART" id="SM01193">
    <property type="entry name" value="Enolase_N"/>
    <property type="match status" value="1"/>
</dbReference>
<dbReference type="SUPFAM" id="SSF51604">
    <property type="entry name" value="Enolase C-terminal domain-like"/>
    <property type="match status" value="1"/>
</dbReference>
<dbReference type="SUPFAM" id="SSF54826">
    <property type="entry name" value="Enolase N-terminal domain-like"/>
    <property type="match status" value="1"/>
</dbReference>
<dbReference type="PROSITE" id="PS00164">
    <property type="entry name" value="ENOLASE"/>
    <property type="match status" value="1"/>
</dbReference>
<comment type="function">
    <text evidence="1">Catalyzes the reversible conversion of 2-phosphoglycerate (2-PG) into phosphoenolpyruvate (PEP). It is essential for the degradation of carbohydrates via glycolysis.</text>
</comment>
<comment type="catalytic activity">
    <reaction evidence="1">
        <text>(2R)-2-phosphoglycerate = phosphoenolpyruvate + H2O</text>
        <dbReference type="Rhea" id="RHEA:10164"/>
        <dbReference type="ChEBI" id="CHEBI:15377"/>
        <dbReference type="ChEBI" id="CHEBI:58289"/>
        <dbReference type="ChEBI" id="CHEBI:58702"/>
        <dbReference type="EC" id="4.2.1.11"/>
    </reaction>
</comment>
<comment type="cofactor">
    <cofactor evidence="1">
        <name>Mg(2+)</name>
        <dbReference type="ChEBI" id="CHEBI:18420"/>
    </cofactor>
    <text evidence="1">Binds a second Mg(2+) ion via substrate during catalysis.</text>
</comment>
<comment type="pathway">
    <text evidence="1">Carbohydrate degradation; glycolysis; pyruvate from D-glyceraldehyde 3-phosphate: step 4/5.</text>
</comment>
<comment type="subcellular location">
    <subcellularLocation>
        <location evidence="1">Cytoplasm</location>
    </subcellularLocation>
    <subcellularLocation>
        <location evidence="1">Secreted</location>
    </subcellularLocation>
    <subcellularLocation>
        <location evidence="1">Cell surface</location>
    </subcellularLocation>
    <text evidence="1">Fractions of enolase are present in both the cytoplasm and on the cell surface.</text>
</comment>
<comment type="similarity">
    <text evidence="1">Belongs to the enolase family.</text>
</comment>
<protein>
    <recommendedName>
        <fullName evidence="1">Enolase</fullName>
        <ecNumber evidence="1">4.2.1.11</ecNumber>
    </recommendedName>
    <alternativeName>
        <fullName evidence="1">2-phospho-D-glycerate hydro-lyase</fullName>
    </alternativeName>
    <alternativeName>
        <fullName evidence="1">2-phosphoglycerate dehydratase</fullName>
    </alternativeName>
</protein>
<keyword id="KW-0963">Cytoplasm</keyword>
<keyword id="KW-0324">Glycolysis</keyword>
<keyword id="KW-0456">Lyase</keyword>
<keyword id="KW-0460">Magnesium</keyword>
<keyword id="KW-0479">Metal-binding</keyword>
<keyword id="KW-0964">Secreted</keyword>
<accession>C0MH89</accession>
<organism>
    <name type="scientific">Streptococcus equi subsp. zooepidemicus (strain H70)</name>
    <dbReference type="NCBI Taxonomy" id="553483"/>
    <lineage>
        <taxon>Bacteria</taxon>
        <taxon>Bacillati</taxon>
        <taxon>Bacillota</taxon>
        <taxon>Bacilli</taxon>
        <taxon>Lactobacillales</taxon>
        <taxon>Streptococcaceae</taxon>
        <taxon>Streptococcus</taxon>
    </lineage>
</organism>
<proteinExistence type="inferred from homology"/>
<evidence type="ECO:0000255" key="1">
    <source>
        <dbReference type="HAMAP-Rule" id="MF_00318"/>
    </source>
</evidence>
<gene>
    <name evidence="1" type="primary">eno</name>
    <name type="ordered locus">SZO_11840</name>
</gene>
<feature type="chain" id="PRO_1000205103" description="Enolase">
    <location>
        <begin position="1"/>
        <end position="435"/>
    </location>
</feature>
<feature type="active site" description="Proton donor" evidence="1">
    <location>
        <position position="205"/>
    </location>
</feature>
<feature type="active site" description="Proton acceptor" evidence="1">
    <location>
        <position position="344"/>
    </location>
</feature>
<feature type="binding site" evidence="1">
    <location>
        <position position="163"/>
    </location>
    <ligand>
        <name>(2R)-2-phosphoglycerate</name>
        <dbReference type="ChEBI" id="CHEBI:58289"/>
    </ligand>
</feature>
<feature type="binding site" evidence="1">
    <location>
        <position position="243"/>
    </location>
    <ligand>
        <name>Mg(2+)</name>
        <dbReference type="ChEBI" id="CHEBI:18420"/>
    </ligand>
</feature>
<feature type="binding site" evidence="1">
    <location>
        <position position="292"/>
    </location>
    <ligand>
        <name>Mg(2+)</name>
        <dbReference type="ChEBI" id="CHEBI:18420"/>
    </ligand>
</feature>
<feature type="binding site" evidence="1">
    <location>
        <position position="319"/>
    </location>
    <ligand>
        <name>Mg(2+)</name>
        <dbReference type="ChEBI" id="CHEBI:18420"/>
    </ligand>
</feature>
<feature type="binding site" evidence="1">
    <location>
        <position position="344"/>
    </location>
    <ligand>
        <name>(2R)-2-phosphoglycerate</name>
        <dbReference type="ChEBI" id="CHEBI:58289"/>
    </ligand>
</feature>
<feature type="binding site" evidence="1">
    <location>
        <position position="373"/>
    </location>
    <ligand>
        <name>(2R)-2-phosphoglycerate</name>
        <dbReference type="ChEBI" id="CHEBI:58289"/>
    </ligand>
</feature>
<feature type="binding site" evidence="1">
    <location>
        <position position="374"/>
    </location>
    <ligand>
        <name>(2R)-2-phosphoglycerate</name>
        <dbReference type="ChEBI" id="CHEBI:58289"/>
    </ligand>
</feature>
<feature type="binding site" evidence="1">
    <location>
        <position position="395"/>
    </location>
    <ligand>
        <name>(2R)-2-phosphoglycerate</name>
        <dbReference type="ChEBI" id="CHEBI:58289"/>
    </ligand>
</feature>
<reference key="1">
    <citation type="journal article" date="2009" name="PLoS Pathog.">
        <title>Genomic evidence for the evolution of Streptococcus equi: host restriction, increased virulence, and genetic exchange with human pathogens.</title>
        <authorList>
            <person name="Holden M.T.G."/>
            <person name="Heather Z."/>
            <person name="Paillot R."/>
            <person name="Steward K.F."/>
            <person name="Webb K."/>
            <person name="Ainslie F."/>
            <person name="Jourdan T."/>
            <person name="Bason N.C."/>
            <person name="Holroyd N.E."/>
            <person name="Mungall K."/>
            <person name="Quail M.A."/>
            <person name="Sanders M."/>
            <person name="Simmonds M."/>
            <person name="Willey D."/>
            <person name="Brooks K."/>
            <person name="Aanensen D.M."/>
            <person name="Spratt B.G."/>
            <person name="Jolley K.A."/>
            <person name="Maiden M.C.J."/>
            <person name="Kehoe M."/>
            <person name="Chanter N."/>
            <person name="Bentley S.D."/>
            <person name="Robinson C."/>
            <person name="Maskell D.J."/>
            <person name="Parkhill J."/>
            <person name="Waller A.S."/>
        </authorList>
    </citation>
    <scope>NUCLEOTIDE SEQUENCE [LARGE SCALE GENOMIC DNA]</scope>
    <source>
        <strain>H70</strain>
    </source>
</reference>
<sequence length="435" mass="47241">MSIITDVYAREVLDSRGNPTLEVEVYTESGAFGRGMVPSGASTGEHEAVELRDGDKSRYLGLGTQKAVDNVNNIIAEAIIGYDVRDQQAIDRAMIALDGTPNKGKLGANAILGVSIAVARAAADYLEVPLYTYLGGFNTKVLPTPMMNIINGGSHSDAPIAFQEFMIMPVGAPTFKEGLRWGAEVFHALKKILKARGLVTAVGDEGGFAPKFEGTEDGVETILKAIEAAGYEAGENGIMIGFDCASSEFYDKERKVYDYTKFEGEGAAVRTSAEQIDYLEELVNKYPIITIEDGMDENDWEGWKALTERLGKRVQLVGDDFFVTNTEYLARGIKEGAANSILIKVNQIGTLTETFEAIEMAKEAGYTAVVSHRSGETEDSTIADIAVATNAGQIKTGSLSRTDRIAKYNQLLRIEDQLGEVAQYKGIKSFYNLKK</sequence>